<proteinExistence type="evidence at protein level"/>
<gene>
    <name evidence="4" type="primary">cntC</name>
    <name evidence="7" type="ordered locus">SAV2465</name>
</gene>
<sequence length="289" mass="31947">MIILKRLLQDKGAVIALGIIVLYVFLGLAAPLVTFYDPNHIDTANKFAGISFQHLLGTDHLGRDILTRLIYAIRPSLLYVFVALFVSVLIGSILGFLSGYFQGFVDALIMRACDVMLAFPSYVVTLALIALFGMGAENIIMAFILTRWAWFCRVIRTSVMQYTASDHVRFAKTIGMNDMKIIHKHIMPLTLADIAIISSSSMCSMILQISGFSFLGLGVKAPTAEWGMMLNEARKVMFTHPEMMFAPGIAIVIIVMAFNFLSDALQIAIDPRISSKDKLRSVKKGVVQS</sequence>
<name>CNTC_STAAM</name>
<organism>
    <name type="scientific">Staphylococcus aureus (strain Mu50 / ATCC 700699)</name>
    <dbReference type="NCBI Taxonomy" id="158878"/>
    <lineage>
        <taxon>Bacteria</taxon>
        <taxon>Bacillati</taxon>
        <taxon>Bacillota</taxon>
        <taxon>Bacilli</taxon>
        <taxon>Bacillales</taxon>
        <taxon>Staphylococcaceae</taxon>
        <taxon>Staphylococcus</taxon>
    </lineage>
</organism>
<keyword id="KW-1003">Cell membrane</keyword>
<keyword id="KW-0170">Cobalt</keyword>
<keyword id="KW-0171">Cobalt transport</keyword>
<keyword id="KW-0186">Copper</keyword>
<keyword id="KW-0187">Copper transport</keyword>
<keyword id="KW-0406">Ion transport</keyword>
<keyword id="KW-0408">Iron</keyword>
<keyword id="KW-0410">Iron transport</keyword>
<keyword id="KW-0472">Membrane</keyword>
<keyword id="KW-0533">Nickel</keyword>
<keyword id="KW-0921">Nickel transport</keyword>
<keyword id="KW-0812">Transmembrane</keyword>
<keyword id="KW-1133">Transmembrane helix</keyword>
<keyword id="KW-0813">Transport</keyword>
<keyword id="KW-0862">Zinc</keyword>
<keyword id="KW-0864">Zinc transport</keyword>
<reference key="1">
    <citation type="journal article" date="2001" name="Lancet">
        <title>Whole genome sequencing of meticillin-resistant Staphylococcus aureus.</title>
        <authorList>
            <person name="Kuroda M."/>
            <person name="Ohta T."/>
            <person name="Uchiyama I."/>
            <person name="Baba T."/>
            <person name="Yuzawa H."/>
            <person name="Kobayashi I."/>
            <person name="Cui L."/>
            <person name="Oguchi A."/>
            <person name="Aoki K."/>
            <person name="Nagai Y."/>
            <person name="Lian J.-Q."/>
            <person name="Ito T."/>
            <person name="Kanamori M."/>
            <person name="Matsumaru H."/>
            <person name="Maruyama A."/>
            <person name="Murakami H."/>
            <person name="Hosoyama A."/>
            <person name="Mizutani-Ui Y."/>
            <person name="Takahashi N.K."/>
            <person name="Sawano T."/>
            <person name="Inoue R."/>
            <person name="Kaito C."/>
            <person name="Sekimizu K."/>
            <person name="Hirakawa H."/>
            <person name="Kuhara S."/>
            <person name="Goto S."/>
            <person name="Yabuzaki J."/>
            <person name="Kanehisa M."/>
            <person name="Yamashita A."/>
            <person name="Oshima K."/>
            <person name="Furuya K."/>
            <person name="Yoshino C."/>
            <person name="Shiba T."/>
            <person name="Hattori M."/>
            <person name="Ogasawara N."/>
            <person name="Hayashi H."/>
            <person name="Hiramatsu K."/>
        </authorList>
    </citation>
    <scope>NUCLEOTIDE SEQUENCE [LARGE SCALE GENOMIC DNA]</scope>
    <source>
        <strain>Mu50 / ATCC 700699</strain>
    </source>
</reference>
<reference key="2">
    <citation type="journal article" date="2016" name="Science">
        <title>Biosynthesis of a broad-spectrum nicotianamine-like metallophore in Staphylococcus aureus.</title>
        <authorList>
            <person name="Ghssein G."/>
            <person name="Brutesco C."/>
            <person name="Ouerdane L."/>
            <person name="Fojcik C."/>
            <person name="Izaute A."/>
            <person name="Wang S."/>
            <person name="Hajjar C."/>
            <person name="Lobinski R."/>
            <person name="Lemaire D."/>
            <person name="Richaud P."/>
            <person name="Voulhoux R."/>
            <person name="Espaillat A."/>
            <person name="Cava F."/>
            <person name="Pignol D."/>
            <person name="Borezee-Durant E."/>
            <person name="Arnoux P."/>
        </authorList>
    </citation>
    <scope>FUNCTION</scope>
    <scope>SUBUNIT</scope>
    <scope>INDUCTION</scope>
    <scope>DISRUPTION PHENOTYPE</scope>
    <source>
        <strain>Mu50 / ATCC 700699</strain>
    </source>
</reference>
<protein>
    <recommendedName>
        <fullName evidence="5">Metal-staphylopine import system permease protein CntC</fullName>
    </recommendedName>
</protein>
<dbReference type="EMBL" id="BA000017">
    <property type="protein sequence ID" value="BAB58627.1"/>
    <property type="molecule type" value="Genomic_DNA"/>
</dbReference>
<dbReference type="RefSeq" id="WP_000584759.1">
    <property type="nucleotide sequence ID" value="NC_002758.2"/>
</dbReference>
<dbReference type="SMR" id="A0A0H3JU73"/>
<dbReference type="KEGG" id="sav:SAV2465"/>
<dbReference type="HOGENOM" id="CLU_028518_1_1_9"/>
<dbReference type="PhylomeDB" id="A0A0H3JU73"/>
<dbReference type="Proteomes" id="UP000002481">
    <property type="component" value="Chromosome"/>
</dbReference>
<dbReference type="GO" id="GO:0005886">
    <property type="term" value="C:plasma membrane"/>
    <property type="evidence" value="ECO:0007669"/>
    <property type="project" value="UniProtKB-SubCell"/>
</dbReference>
<dbReference type="GO" id="GO:0006824">
    <property type="term" value="P:cobalt ion transport"/>
    <property type="evidence" value="ECO:0007669"/>
    <property type="project" value="UniProtKB-KW"/>
</dbReference>
<dbReference type="GO" id="GO:0006825">
    <property type="term" value="P:copper ion transport"/>
    <property type="evidence" value="ECO:0007669"/>
    <property type="project" value="UniProtKB-KW"/>
</dbReference>
<dbReference type="GO" id="GO:0006826">
    <property type="term" value="P:iron ion transport"/>
    <property type="evidence" value="ECO:0007669"/>
    <property type="project" value="UniProtKB-KW"/>
</dbReference>
<dbReference type="GO" id="GO:0015675">
    <property type="term" value="P:nickel cation transport"/>
    <property type="evidence" value="ECO:0007669"/>
    <property type="project" value="UniProtKB-KW"/>
</dbReference>
<dbReference type="GO" id="GO:0006829">
    <property type="term" value="P:zinc ion transport"/>
    <property type="evidence" value="ECO:0007669"/>
    <property type="project" value="UniProtKB-KW"/>
</dbReference>
<dbReference type="CDD" id="cd06261">
    <property type="entry name" value="TM_PBP2"/>
    <property type="match status" value="1"/>
</dbReference>
<dbReference type="Gene3D" id="1.10.3720.10">
    <property type="entry name" value="MetI-like"/>
    <property type="match status" value="1"/>
</dbReference>
<dbReference type="InterPro" id="IPR050366">
    <property type="entry name" value="BP-dependent_transpt_permease"/>
</dbReference>
<dbReference type="InterPro" id="IPR000515">
    <property type="entry name" value="MetI-like"/>
</dbReference>
<dbReference type="InterPro" id="IPR035906">
    <property type="entry name" value="MetI-like_sf"/>
</dbReference>
<dbReference type="InterPro" id="IPR025966">
    <property type="entry name" value="OppC_N"/>
</dbReference>
<dbReference type="InterPro" id="IPR053474">
    <property type="entry name" value="Staphylopine_ABC_permease"/>
</dbReference>
<dbReference type="NCBIfam" id="NF047573">
    <property type="entry name" value="opine_perm_CntC"/>
    <property type="match status" value="1"/>
</dbReference>
<dbReference type="NCBIfam" id="NF045473">
    <property type="entry name" value="Opp1C"/>
    <property type="match status" value="1"/>
</dbReference>
<dbReference type="PANTHER" id="PTHR43386:SF1">
    <property type="entry name" value="D,D-DIPEPTIDE TRANSPORT SYSTEM PERMEASE PROTEIN DDPC-RELATED"/>
    <property type="match status" value="1"/>
</dbReference>
<dbReference type="PANTHER" id="PTHR43386">
    <property type="entry name" value="OLIGOPEPTIDE TRANSPORT SYSTEM PERMEASE PROTEIN APPC"/>
    <property type="match status" value="1"/>
</dbReference>
<dbReference type="Pfam" id="PF00528">
    <property type="entry name" value="BPD_transp_1"/>
    <property type="match status" value="1"/>
</dbReference>
<dbReference type="Pfam" id="PF12911">
    <property type="entry name" value="OppC_N"/>
    <property type="match status" value="1"/>
</dbReference>
<dbReference type="SUPFAM" id="SSF161098">
    <property type="entry name" value="MetI-like"/>
    <property type="match status" value="1"/>
</dbReference>
<dbReference type="PROSITE" id="PS50928">
    <property type="entry name" value="ABC_TM1"/>
    <property type="match status" value="1"/>
</dbReference>
<feature type="chain" id="PRO_0000447274" description="Metal-staphylopine import system permease protein CntC">
    <location>
        <begin position="1"/>
        <end position="289"/>
    </location>
</feature>
<feature type="transmembrane region" description="Helical" evidence="1">
    <location>
        <begin position="13"/>
        <end position="33"/>
    </location>
</feature>
<feature type="transmembrane region" description="Helical" evidence="1">
    <location>
        <begin position="77"/>
        <end position="97"/>
    </location>
</feature>
<feature type="transmembrane region" description="Helical" evidence="1">
    <location>
        <begin position="115"/>
        <end position="135"/>
    </location>
</feature>
<feature type="transmembrane region" description="Helical" evidence="1">
    <location>
        <begin position="194"/>
        <end position="214"/>
    </location>
</feature>
<feature type="transmembrane region" description="Helical" evidence="1">
    <location>
        <begin position="249"/>
        <end position="269"/>
    </location>
</feature>
<feature type="domain" description="ABC transmembrane type-1" evidence="2">
    <location>
        <begin position="73"/>
        <end position="262"/>
    </location>
</feature>
<comment type="function">
    <text evidence="3">Part of the ABC transporter complex CntABCDF (Opp1) involved in the uptake of metal in complex with the metallophore staphylopine (StP). May be involved in the import of a large array of divalent metals ions such as nickel, cobalt, zinc, copper and iron. Probably responsible for the translocation of the substrate across the membrane.</text>
</comment>
<comment type="subunit">
    <text evidence="6">The complex is composed of two ATP-binding proteins (CntD and CntF), two transmembrane proteins (CntB and CntC) and a solute-binding protein (CntA).</text>
</comment>
<comment type="subcellular location">
    <subcellularLocation>
        <location evidence="5">Cell membrane</location>
        <topology evidence="1">Multi-pass membrane protein</topology>
    </subcellularLocation>
</comment>
<comment type="induction">
    <text evidence="3">Up-regulated in metal-poor media.</text>
</comment>
<comment type="disruption phenotype">
    <text evidence="3">Deletion of the cntABCDF genes decreases StP intracellular levels and decreases the import of iron, zinc, nickel and cobalt.</text>
</comment>
<comment type="similarity">
    <text evidence="5">Belongs to the binding-protein-dependent transport system permease family.</text>
</comment>
<accession>A0A0H3JU73</accession>
<evidence type="ECO:0000255" key="1"/>
<evidence type="ECO:0000255" key="2">
    <source>
        <dbReference type="PROSITE-ProRule" id="PRU00441"/>
    </source>
</evidence>
<evidence type="ECO:0000269" key="3">
    <source>
    </source>
</evidence>
<evidence type="ECO:0000303" key="4">
    <source>
    </source>
</evidence>
<evidence type="ECO:0000305" key="5"/>
<evidence type="ECO:0000305" key="6">
    <source>
    </source>
</evidence>
<evidence type="ECO:0000312" key="7">
    <source>
        <dbReference type="EMBL" id="BAB58627.1"/>
    </source>
</evidence>